<dbReference type="EC" id="3.4.24.-"/>
<dbReference type="EMBL" id="AB001735">
    <property type="protein sequence ID" value="BAA24501.1"/>
    <property type="status" value="ALT_INIT"/>
    <property type="molecule type" value="Genomic_DNA"/>
</dbReference>
<dbReference type="EMBL" id="D67076">
    <property type="protein sequence ID" value="BAA11088.1"/>
    <property type="status" value="ALT_FRAME"/>
    <property type="molecule type" value="mRNA"/>
</dbReference>
<dbReference type="EMBL" id="AC126936">
    <property type="status" value="NOT_ANNOTATED_CDS"/>
    <property type="molecule type" value="Genomic_DNA"/>
</dbReference>
<dbReference type="EMBL" id="BC040382">
    <property type="protein sequence ID" value="AAH40382.1"/>
    <property type="molecule type" value="mRNA"/>
</dbReference>
<dbReference type="EMBL" id="BC050834">
    <property type="protein sequence ID" value="AAH50834.1"/>
    <property type="molecule type" value="mRNA"/>
</dbReference>
<dbReference type="CCDS" id="CCDS28287.1"/>
<dbReference type="PIR" id="T00017">
    <property type="entry name" value="T00017"/>
</dbReference>
<dbReference type="RefSeq" id="NP_033751.3">
    <property type="nucleotide sequence ID" value="NM_009621.5"/>
</dbReference>
<dbReference type="SMR" id="P97857"/>
<dbReference type="BioGRID" id="197974">
    <property type="interactions" value="4"/>
</dbReference>
<dbReference type="FunCoup" id="P97857">
    <property type="interactions" value="198"/>
</dbReference>
<dbReference type="STRING" id="10090.ENSMUSP00000023610"/>
<dbReference type="MEROPS" id="M12.222"/>
<dbReference type="GlyCosmos" id="P97857">
    <property type="glycosylation" value="5 sites, No reported glycans"/>
</dbReference>
<dbReference type="GlyGen" id="P97857">
    <property type="glycosylation" value="9 sites, 1 O-linked glycan (3 sites)"/>
</dbReference>
<dbReference type="iPTMnet" id="P97857"/>
<dbReference type="PhosphoSitePlus" id="P97857"/>
<dbReference type="CPTAC" id="non-CPTAC-3962"/>
<dbReference type="PaxDb" id="10090-ENSMUSP00000023610"/>
<dbReference type="PeptideAtlas" id="P97857"/>
<dbReference type="ProteomicsDB" id="277135"/>
<dbReference type="Pumba" id="P97857"/>
<dbReference type="Antibodypedia" id="4291">
    <property type="antibodies" value="415 antibodies from 33 providers"/>
</dbReference>
<dbReference type="DNASU" id="11504"/>
<dbReference type="Ensembl" id="ENSMUST00000023610.15">
    <property type="protein sequence ID" value="ENSMUSP00000023610.9"/>
    <property type="gene ID" value="ENSMUSG00000022893.15"/>
</dbReference>
<dbReference type="GeneID" id="11504"/>
<dbReference type="KEGG" id="mmu:11504"/>
<dbReference type="UCSC" id="uc012aho.1">
    <property type="organism name" value="mouse"/>
</dbReference>
<dbReference type="AGR" id="MGI:109249"/>
<dbReference type="CTD" id="9510"/>
<dbReference type="MGI" id="MGI:109249">
    <property type="gene designation" value="Adamts1"/>
</dbReference>
<dbReference type="VEuPathDB" id="HostDB:ENSMUSG00000022893"/>
<dbReference type="eggNOG" id="KOG3538">
    <property type="taxonomic scope" value="Eukaryota"/>
</dbReference>
<dbReference type="GeneTree" id="ENSGT00940000156815"/>
<dbReference type="HOGENOM" id="CLU_000660_3_0_1"/>
<dbReference type="InParanoid" id="P97857"/>
<dbReference type="OMA" id="VNRDSHM"/>
<dbReference type="OrthoDB" id="412680at2759"/>
<dbReference type="PhylomeDB" id="P97857"/>
<dbReference type="TreeFam" id="TF331949"/>
<dbReference type="BRENDA" id="3.4.24.B11">
    <property type="organism ID" value="3474"/>
</dbReference>
<dbReference type="Reactome" id="R-MMU-5173214">
    <property type="pathway name" value="O-glycosylation of TSR domain-containing proteins"/>
</dbReference>
<dbReference type="BioGRID-ORCS" id="11504">
    <property type="hits" value="1 hit in 79 CRISPR screens"/>
</dbReference>
<dbReference type="ChiTaRS" id="Adamts1">
    <property type="organism name" value="mouse"/>
</dbReference>
<dbReference type="PRO" id="PR:P97857"/>
<dbReference type="Proteomes" id="UP000000589">
    <property type="component" value="Chromosome 16"/>
</dbReference>
<dbReference type="RNAct" id="P97857">
    <property type="molecule type" value="protein"/>
</dbReference>
<dbReference type="Bgee" id="ENSMUSG00000022893">
    <property type="expression patterns" value="Expressed in iris and 265 other cell types or tissues"/>
</dbReference>
<dbReference type="ExpressionAtlas" id="P97857">
    <property type="expression patterns" value="baseline and differential"/>
</dbReference>
<dbReference type="GO" id="GO:0005604">
    <property type="term" value="C:basement membrane"/>
    <property type="evidence" value="ECO:0000314"/>
    <property type="project" value="MGI"/>
</dbReference>
<dbReference type="GO" id="GO:0031410">
    <property type="term" value="C:cytoplasmic vesicle"/>
    <property type="evidence" value="ECO:0000314"/>
    <property type="project" value="MGI"/>
</dbReference>
<dbReference type="GO" id="GO:0031012">
    <property type="term" value="C:extracellular matrix"/>
    <property type="evidence" value="ECO:0000314"/>
    <property type="project" value="MGI"/>
</dbReference>
<dbReference type="GO" id="GO:0005576">
    <property type="term" value="C:extracellular region"/>
    <property type="evidence" value="ECO:0007669"/>
    <property type="project" value="UniProtKB-KW"/>
</dbReference>
<dbReference type="GO" id="GO:0008201">
    <property type="term" value="F:heparin binding"/>
    <property type="evidence" value="ECO:0000314"/>
    <property type="project" value="MGI"/>
</dbReference>
<dbReference type="GO" id="GO:0004222">
    <property type="term" value="F:metalloendopeptidase activity"/>
    <property type="evidence" value="ECO:0000314"/>
    <property type="project" value="MGI"/>
</dbReference>
<dbReference type="GO" id="GO:0008270">
    <property type="term" value="F:zinc ion binding"/>
    <property type="evidence" value="ECO:0007669"/>
    <property type="project" value="InterPro"/>
</dbReference>
<dbReference type="GO" id="GO:0030198">
    <property type="term" value="P:extracellular matrix organization"/>
    <property type="evidence" value="ECO:0007669"/>
    <property type="project" value="InterPro"/>
</dbReference>
<dbReference type="GO" id="GO:0060347">
    <property type="term" value="P:heart trabecula formation"/>
    <property type="evidence" value="ECO:0000315"/>
    <property type="project" value="MGI"/>
</dbReference>
<dbReference type="GO" id="GO:0001822">
    <property type="term" value="P:kidney development"/>
    <property type="evidence" value="ECO:0000315"/>
    <property type="project" value="MGI"/>
</dbReference>
<dbReference type="GO" id="GO:0016525">
    <property type="term" value="P:negative regulation of angiogenesis"/>
    <property type="evidence" value="ECO:0000266"/>
    <property type="project" value="MGI"/>
</dbReference>
<dbReference type="GO" id="GO:0001542">
    <property type="term" value="P:ovulation from ovarian follicle"/>
    <property type="evidence" value="ECO:0000315"/>
    <property type="project" value="MGI"/>
</dbReference>
<dbReference type="GO" id="GO:1900087">
    <property type="term" value="P:positive regulation of G1/S transition of mitotic cell cycle"/>
    <property type="evidence" value="ECO:0007669"/>
    <property type="project" value="Ensembl"/>
</dbReference>
<dbReference type="GO" id="GO:1904754">
    <property type="term" value="P:positive regulation of vascular associated smooth muscle cell migration"/>
    <property type="evidence" value="ECO:0007669"/>
    <property type="project" value="Ensembl"/>
</dbReference>
<dbReference type="GO" id="GO:1904707">
    <property type="term" value="P:positive regulation of vascular associated smooth muscle cell proliferation"/>
    <property type="evidence" value="ECO:0007669"/>
    <property type="project" value="Ensembl"/>
</dbReference>
<dbReference type="GO" id="GO:0006508">
    <property type="term" value="P:proteolysis"/>
    <property type="evidence" value="ECO:0007669"/>
    <property type="project" value="UniProtKB-KW"/>
</dbReference>
<dbReference type="CDD" id="cd04273">
    <property type="entry name" value="ZnMc_ADAMTS_like"/>
    <property type="match status" value="1"/>
</dbReference>
<dbReference type="FunFam" id="2.20.100.10:FF:000006">
    <property type="entry name" value="A disintegrin and metalloproteinase with thrombospondin motifs 1"/>
    <property type="match status" value="1"/>
</dbReference>
<dbReference type="FunFam" id="2.60.120.830:FF:000001">
    <property type="entry name" value="A disintegrin and metalloproteinase with thrombospondin motifs 1"/>
    <property type="match status" value="1"/>
</dbReference>
<dbReference type="FunFam" id="3.40.1620.60:FF:000003">
    <property type="entry name" value="A disintegrin and metalloproteinase with thrombospondin motifs 1"/>
    <property type="match status" value="1"/>
</dbReference>
<dbReference type="FunFam" id="3.40.390.10:FF:000001">
    <property type="entry name" value="A disintegrin and metalloproteinase with thrombospondin motifs 1"/>
    <property type="match status" value="1"/>
</dbReference>
<dbReference type="FunFam" id="2.20.100.10:FF:000048">
    <property type="entry name" value="ADAM metallopeptidase with thrombospondin type 1 motif 8"/>
    <property type="match status" value="1"/>
</dbReference>
<dbReference type="FunFam" id="2.20.100.10:FF:000005">
    <property type="entry name" value="ADAM metallopeptidase with thrombospondin type 1 motif 9"/>
    <property type="match status" value="1"/>
</dbReference>
<dbReference type="Gene3D" id="2.60.120.830">
    <property type="match status" value="1"/>
</dbReference>
<dbReference type="Gene3D" id="3.40.1620.60">
    <property type="match status" value="1"/>
</dbReference>
<dbReference type="Gene3D" id="3.40.390.10">
    <property type="entry name" value="Collagenase (Catalytic Domain)"/>
    <property type="match status" value="1"/>
</dbReference>
<dbReference type="Gene3D" id="2.20.100.10">
    <property type="entry name" value="Thrombospondin type-1 (TSP1) repeat"/>
    <property type="match status" value="3"/>
</dbReference>
<dbReference type="InterPro" id="IPR006586">
    <property type="entry name" value="ADAM_Cys-rich"/>
</dbReference>
<dbReference type="InterPro" id="IPR013273">
    <property type="entry name" value="ADAMTS/ADAMTS-like"/>
</dbReference>
<dbReference type="InterPro" id="IPR050439">
    <property type="entry name" value="ADAMTS_ADAMTS-like"/>
</dbReference>
<dbReference type="InterPro" id="IPR041645">
    <property type="entry name" value="ADAMTS_CR_2"/>
</dbReference>
<dbReference type="InterPro" id="IPR045371">
    <property type="entry name" value="ADAMTS_CR_3"/>
</dbReference>
<dbReference type="InterPro" id="IPR010294">
    <property type="entry name" value="ADAMTS_spacer1"/>
</dbReference>
<dbReference type="InterPro" id="IPR024079">
    <property type="entry name" value="MetalloPept_cat_dom_sf"/>
</dbReference>
<dbReference type="InterPro" id="IPR013274">
    <property type="entry name" value="Pept_M12B_ADAM-TS1"/>
</dbReference>
<dbReference type="InterPro" id="IPR001590">
    <property type="entry name" value="Peptidase_M12B"/>
</dbReference>
<dbReference type="InterPro" id="IPR002870">
    <property type="entry name" value="Peptidase_M12B_N"/>
</dbReference>
<dbReference type="InterPro" id="IPR000884">
    <property type="entry name" value="TSP1_rpt"/>
</dbReference>
<dbReference type="InterPro" id="IPR036383">
    <property type="entry name" value="TSP1_rpt_sf"/>
</dbReference>
<dbReference type="PANTHER" id="PTHR13723:SF40">
    <property type="entry name" value="A DISINTEGRIN AND METALLOPROTEINASE WITH THROMBOSPONDIN MOTIFS 1"/>
    <property type="match status" value="1"/>
</dbReference>
<dbReference type="PANTHER" id="PTHR13723">
    <property type="entry name" value="ADAMTS A DISINTEGRIN AND METALLOPROTEASE WITH THROMBOSPONDIN MOTIFS PROTEASE"/>
    <property type="match status" value="1"/>
</dbReference>
<dbReference type="Pfam" id="PF17771">
    <property type="entry name" value="ADAMTS_CR_2"/>
    <property type="match status" value="1"/>
</dbReference>
<dbReference type="Pfam" id="PF19236">
    <property type="entry name" value="ADAMTS_CR_3"/>
    <property type="match status" value="1"/>
</dbReference>
<dbReference type="Pfam" id="PF05986">
    <property type="entry name" value="ADAMTS_spacer1"/>
    <property type="match status" value="1"/>
</dbReference>
<dbReference type="Pfam" id="PF01562">
    <property type="entry name" value="Pep_M12B_propep"/>
    <property type="match status" value="1"/>
</dbReference>
<dbReference type="Pfam" id="PF01421">
    <property type="entry name" value="Reprolysin"/>
    <property type="match status" value="1"/>
</dbReference>
<dbReference type="Pfam" id="PF19030">
    <property type="entry name" value="TSP1_ADAMTS"/>
    <property type="match status" value="2"/>
</dbReference>
<dbReference type="Pfam" id="PF00090">
    <property type="entry name" value="TSP_1"/>
    <property type="match status" value="1"/>
</dbReference>
<dbReference type="PRINTS" id="PR01858">
    <property type="entry name" value="ADAMTS1"/>
</dbReference>
<dbReference type="PRINTS" id="PR01857">
    <property type="entry name" value="ADAMTSFAMILY"/>
</dbReference>
<dbReference type="PRINTS" id="PR01705">
    <property type="entry name" value="TSP1REPEAT"/>
</dbReference>
<dbReference type="SMART" id="SM00608">
    <property type="entry name" value="ACR"/>
    <property type="match status" value="1"/>
</dbReference>
<dbReference type="SMART" id="SM00209">
    <property type="entry name" value="TSP1"/>
    <property type="match status" value="3"/>
</dbReference>
<dbReference type="SUPFAM" id="SSF55486">
    <property type="entry name" value="Metalloproteases ('zincins'), catalytic domain"/>
    <property type="match status" value="1"/>
</dbReference>
<dbReference type="SUPFAM" id="SSF82895">
    <property type="entry name" value="TSP-1 type 1 repeat"/>
    <property type="match status" value="3"/>
</dbReference>
<dbReference type="PROSITE" id="PS50215">
    <property type="entry name" value="ADAM_MEPRO"/>
    <property type="match status" value="1"/>
</dbReference>
<dbReference type="PROSITE" id="PS50092">
    <property type="entry name" value="TSP1"/>
    <property type="match status" value="3"/>
</dbReference>
<dbReference type="PROSITE" id="PS00142">
    <property type="entry name" value="ZINC_PROTEASE"/>
    <property type="match status" value="1"/>
</dbReference>
<proteinExistence type="evidence at protein level"/>
<protein>
    <recommendedName>
        <fullName>A disintegrin and metalloproteinase with thrombospondin motifs 1</fullName>
        <shortName>ADAM-TS 1</shortName>
        <shortName>ADAM-TS1</shortName>
        <shortName>ADAMTS-1</shortName>
        <ecNumber>3.4.24.-</ecNumber>
    </recommendedName>
</protein>
<reference key="1">
    <citation type="journal article" date="1997" name="Genomics">
        <title>The exon/intron organization and chromosomal mapping of the mouse ADAMTS-1 gene encoding an ADAM family protein with TSP motifs.</title>
        <authorList>
            <person name="Kuno K."/>
            <person name="Lizasa H."/>
            <person name="Ohno S."/>
            <person name="Matsushima K."/>
        </authorList>
    </citation>
    <scope>NUCLEOTIDE SEQUENCE [GENOMIC DNA]</scope>
    <source>
        <strain>129/SvJ</strain>
    </source>
</reference>
<reference key="2">
    <citation type="journal article" date="1997" name="J. Biol. Chem.">
        <title>Molecular cloning of a gene encoding a new type of metalloproteinase-disintegrin family protein with thrombospondin motifs as an inflammation associated gene.</title>
        <authorList>
            <person name="Kuno K."/>
            <person name="Kanada N."/>
            <person name="Nakashima E."/>
            <person name="Fujiki F."/>
            <person name="Ichimura F."/>
            <person name="Matsushima K."/>
        </authorList>
    </citation>
    <scope>NUCLEOTIDE SEQUENCE [MRNA]</scope>
</reference>
<reference key="3">
    <citation type="journal article" date="2009" name="PLoS Biol.">
        <title>Lineage-specific biology revealed by a finished genome assembly of the mouse.</title>
        <authorList>
            <person name="Church D.M."/>
            <person name="Goodstadt L."/>
            <person name="Hillier L.W."/>
            <person name="Zody M.C."/>
            <person name="Goldstein S."/>
            <person name="She X."/>
            <person name="Bult C.J."/>
            <person name="Agarwala R."/>
            <person name="Cherry J.L."/>
            <person name="DiCuccio M."/>
            <person name="Hlavina W."/>
            <person name="Kapustin Y."/>
            <person name="Meric P."/>
            <person name="Maglott D."/>
            <person name="Birtle Z."/>
            <person name="Marques A.C."/>
            <person name="Graves T."/>
            <person name="Zhou S."/>
            <person name="Teague B."/>
            <person name="Potamousis K."/>
            <person name="Churas C."/>
            <person name="Place M."/>
            <person name="Herschleb J."/>
            <person name="Runnheim R."/>
            <person name="Forrest D."/>
            <person name="Amos-Landgraf J."/>
            <person name="Schwartz D.C."/>
            <person name="Cheng Z."/>
            <person name="Lindblad-Toh K."/>
            <person name="Eichler E.E."/>
            <person name="Ponting C.P."/>
        </authorList>
    </citation>
    <scope>NUCLEOTIDE SEQUENCE [LARGE SCALE GENOMIC DNA]</scope>
    <source>
        <strain>C57BL/6J</strain>
    </source>
</reference>
<reference key="4">
    <citation type="journal article" date="2004" name="Genome Res.">
        <title>The status, quality, and expansion of the NIH full-length cDNA project: the Mammalian Gene Collection (MGC).</title>
        <authorList>
            <consortium name="The MGC Project Team"/>
        </authorList>
    </citation>
    <scope>NUCLEOTIDE SEQUENCE [LARGE SCALE MRNA]</scope>
    <source>
        <tissue>Limb</tissue>
        <tissue>Mammary gland</tissue>
    </source>
</reference>
<reference key="5">
    <citation type="journal article" date="1999" name="J. Biol. Chem.">
        <title>ADAMTS-1 is an active metalloproteinase associated with the extracellular matrix.</title>
        <authorList>
            <person name="Kuno K."/>
            <person name="Terashima Y."/>
            <person name="Matsushima K."/>
        </authorList>
    </citation>
    <scope>CHARACTERIZATION</scope>
    <scope>MUTAGENESIS OF GLU-403</scope>
</reference>
<reference key="6">
    <citation type="journal article" date="2000" name="FEBS Lett.">
        <title>ADAMTS-1 cleaves a cartilage proteoglycan, aggrecan.</title>
        <authorList>
            <person name="Kuno K."/>
            <person name="Okada Y."/>
            <person name="Kawashima H."/>
            <person name="Nakamura H."/>
            <person name="Miyasaka M."/>
            <person name="Ohno H."/>
            <person name="Matsushima K."/>
        </authorList>
    </citation>
    <scope>FUNCTION</scope>
</reference>
<reference key="7">
    <citation type="journal article" date="2000" name="Proc. Natl. Acad. Sci. U.S.A.">
        <title>Progesterone-regulated genes in the ovulation process: ADAMTS-1 and cathepsin L proteases.</title>
        <authorList>
            <person name="Robker R.L."/>
            <person name="Russell D.L."/>
            <person name="Espey L.L."/>
            <person name="Lydon J.P."/>
            <person name="O'Malley B.W."/>
            <person name="Richards J.S."/>
        </authorList>
    </citation>
    <scope>FUNCTION</scope>
    <scope>INDUCTION</scope>
</reference>
<reference key="8">
    <citation type="journal article" date="2013" name="J. Biol. Chem.">
        <title>Versican processing by a disintegrin-like and metalloproteinase domain with thrombospondin-1 repeats proteinases-5 and -15 facilitates myoblast fusion.</title>
        <authorList>
            <person name="Stupka N."/>
            <person name="Kintakas C."/>
            <person name="White J.D."/>
            <person name="Fraser F.W."/>
            <person name="Hanciu M."/>
            <person name="Aramaki-Hattori N."/>
            <person name="Martin S."/>
            <person name="Coles C."/>
            <person name="Collier F."/>
            <person name="Ward A.C."/>
            <person name="Apte S.S."/>
            <person name="McCulloch D.R."/>
        </authorList>
    </citation>
    <scope>DEVELOPMENTAL STAGE</scope>
</reference>
<gene>
    <name type="primary">Adamts1</name>
</gene>
<accession>P97857</accession>
<accession>E9QMN9</accession>
<accession>O54768</accession>
<feature type="signal peptide" evidence="3">
    <location>
        <begin position="1"/>
        <end position="48"/>
    </location>
</feature>
<feature type="propeptide" id="PRO_0000029152">
    <location>
        <begin position="49"/>
        <end position="253"/>
    </location>
</feature>
<feature type="chain" id="PRO_0000029153" description="A disintegrin and metalloproteinase with thrombospondin motifs 1">
    <location>
        <begin position="254"/>
        <end position="968"/>
    </location>
</feature>
<feature type="domain" description="Peptidase M12B" evidence="5">
    <location>
        <begin position="259"/>
        <end position="468"/>
    </location>
</feature>
<feature type="domain" description="Disintegrin">
    <location>
        <begin position="477"/>
        <end position="559"/>
    </location>
</feature>
<feature type="domain" description="TSP type-1 1" evidence="4">
    <location>
        <begin position="560"/>
        <end position="615"/>
    </location>
</feature>
<feature type="domain" description="TSP type-1 2" evidence="4">
    <location>
        <begin position="855"/>
        <end position="911"/>
    </location>
</feature>
<feature type="domain" description="TSP type-1 3" evidence="4">
    <location>
        <begin position="912"/>
        <end position="968"/>
    </location>
</feature>
<feature type="region of interest" description="Disordered" evidence="6">
    <location>
        <begin position="1"/>
        <end position="23"/>
    </location>
</feature>
<feature type="region of interest" description="Disordered" evidence="6">
    <location>
        <begin position="177"/>
        <end position="253"/>
    </location>
</feature>
<feature type="region of interest" description="Spacer">
    <location>
        <begin position="726"/>
        <end position="850"/>
    </location>
</feature>
<feature type="short sequence motif" description="Cysteine switch" evidence="1">
    <location>
        <begin position="204"/>
        <end position="211"/>
    </location>
</feature>
<feature type="compositionally biased region" description="Polar residues" evidence="6">
    <location>
        <begin position="214"/>
        <end position="229"/>
    </location>
</feature>
<feature type="active site" evidence="7">
    <location>
        <position position="403"/>
    </location>
</feature>
<feature type="binding site" description="in inhibited form" evidence="1">
    <location>
        <position position="206"/>
    </location>
    <ligand>
        <name>Zn(2+)</name>
        <dbReference type="ChEBI" id="CHEBI:29105"/>
        <note>catalytic</note>
    </ligand>
</feature>
<feature type="binding site" evidence="2">
    <location>
        <position position="262"/>
    </location>
    <ligand>
        <name>Ca(2+)</name>
        <dbReference type="ChEBI" id="CHEBI:29108"/>
        <label>1</label>
    </ligand>
</feature>
<feature type="binding site" evidence="2">
    <location>
        <position position="262"/>
    </location>
    <ligand>
        <name>Ca(2+)</name>
        <dbReference type="ChEBI" id="CHEBI:29108"/>
        <label>2</label>
    </ligand>
</feature>
<feature type="binding site" evidence="2">
    <location>
        <position position="345"/>
    </location>
    <ligand>
        <name>Ca(2+)</name>
        <dbReference type="ChEBI" id="CHEBI:29108"/>
        <label>1</label>
    </ligand>
</feature>
<feature type="binding site" evidence="2">
    <location>
        <position position="345"/>
    </location>
    <ligand>
        <name>Ca(2+)</name>
        <dbReference type="ChEBI" id="CHEBI:29108"/>
        <label>2</label>
    </ligand>
</feature>
<feature type="binding site" evidence="2">
    <location>
        <position position="352"/>
    </location>
    <ligand>
        <name>Ca(2+)</name>
        <dbReference type="ChEBI" id="CHEBI:29108"/>
        <label>1</label>
    </ligand>
</feature>
<feature type="binding site" evidence="2">
    <location>
        <position position="402"/>
    </location>
    <ligand>
        <name>Zn(2+)</name>
        <dbReference type="ChEBI" id="CHEBI:29105"/>
        <note>catalytic</note>
    </ligand>
</feature>
<feature type="binding site" evidence="2">
    <location>
        <position position="406"/>
    </location>
    <ligand>
        <name>Zn(2+)</name>
        <dbReference type="ChEBI" id="CHEBI:29105"/>
        <note>catalytic</note>
    </ligand>
</feature>
<feature type="binding site" evidence="2">
    <location>
        <position position="412"/>
    </location>
    <ligand>
        <name>Zn(2+)</name>
        <dbReference type="ChEBI" id="CHEBI:29105"/>
        <note>catalytic</note>
    </ligand>
</feature>
<feature type="binding site" evidence="2">
    <location>
        <position position="463"/>
    </location>
    <ligand>
        <name>Ca(2+)</name>
        <dbReference type="ChEBI" id="CHEBI:29108"/>
        <label>1</label>
    </ligand>
</feature>
<feature type="binding site" evidence="2">
    <location>
        <position position="466"/>
    </location>
    <ligand>
        <name>Ca(2+)</name>
        <dbReference type="ChEBI" id="CHEBI:29108"/>
        <label>1</label>
    </ligand>
</feature>
<feature type="binding site" evidence="2">
    <location>
        <position position="466"/>
    </location>
    <ligand>
        <name>Ca(2+)</name>
        <dbReference type="ChEBI" id="CHEBI:29108"/>
        <label>2</label>
    </ligand>
</feature>
<feature type="glycosylation site" description="N-linked (GlcNAc...) asparagine" evidence="3">
    <location>
        <position position="548"/>
    </location>
</feature>
<feature type="glycosylation site" description="N-linked (GlcNAc...) asparagine" evidence="3">
    <location>
        <position position="721"/>
    </location>
</feature>
<feature type="glycosylation site" description="N-linked (GlcNAc...) asparagine" evidence="3">
    <location>
        <position position="765"/>
    </location>
</feature>
<feature type="glycosylation site" description="N-linked (GlcNAc...) asparagine" evidence="3">
    <location>
        <position position="783"/>
    </location>
</feature>
<feature type="glycosylation site" description="N-linked (GlcNAc...) asparagine" evidence="3">
    <location>
        <position position="946"/>
    </location>
</feature>
<feature type="disulfide bond" evidence="2">
    <location>
        <begin position="334"/>
        <end position="386"/>
    </location>
</feature>
<feature type="disulfide bond" evidence="2">
    <location>
        <begin position="363"/>
        <end position="368"/>
    </location>
</feature>
<feature type="disulfide bond" evidence="2">
    <location>
        <begin position="380"/>
        <end position="463"/>
    </location>
</feature>
<feature type="disulfide bond" evidence="2">
    <location>
        <begin position="418"/>
        <end position="447"/>
    </location>
</feature>
<feature type="disulfide bond" evidence="2">
    <location>
        <begin position="489"/>
        <end position="512"/>
    </location>
</feature>
<feature type="disulfide bond" evidence="2">
    <location>
        <begin position="500"/>
        <end position="522"/>
    </location>
</feature>
<feature type="disulfide bond" evidence="2">
    <location>
        <begin position="507"/>
        <end position="541"/>
    </location>
</feature>
<feature type="disulfide bond" evidence="2">
    <location>
        <begin position="535"/>
        <end position="546"/>
    </location>
</feature>
<feature type="disulfide bond" evidence="1">
    <location>
        <begin position="572"/>
        <end position="609"/>
    </location>
</feature>
<feature type="disulfide bond" evidence="1">
    <location>
        <begin position="576"/>
        <end position="614"/>
    </location>
</feature>
<feature type="disulfide bond" evidence="1">
    <location>
        <begin position="587"/>
        <end position="599"/>
    </location>
</feature>
<feature type="mutagenesis site" description="Loss of activity." evidence="7">
    <original>E</original>
    <variation>Q</variation>
    <location>
        <position position="403"/>
    </location>
</feature>
<feature type="sequence conflict" description="In Ref. 1; BAA24501 and 4; AAH40382/AAH50834." evidence="12" ref="1 4">
    <original>S</original>
    <variation>N</variation>
    <location>
        <position position="335"/>
    </location>
</feature>
<feature type="sequence conflict" description="In Ref. 1; BAA24501 and 4; AAH40382/AAH50834." evidence="12" ref="1 4">
    <original>S</original>
    <variation>T</variation>
    <location>
        <position position="425"/>
    </location>
</feature>
<comment type="function">
    <text evidence="2 8 9 11">Metalloprotease which cleaves aggrecan, a cartilage proteoglycan, at the '1691-Glu-|-Leu-1692' site (within the chondroitin sulfate attachment domain), and may be involved in its turnover (PubMed:10930576, PubMed:9441751). Also cleaves COMP (By similarity). Has angiogenic inhibitor activity (By similarity). May play a critical role in follicular rupture (PubMed:10781075).</text>
</comment>
<comment type="cofactor">
    <cofactor evidence="2">
        <name>Zn(2+)</name>
        <dbReference type="ChEBI" id="CHEBI:29105"/>
    </cofactor>
    <text evidence="2">Binds 1 zinc ion per subunit.</text>
</comment>
<comment type="subcellular location">
    <subcellularLocation>
        <location>Secreted</location>
        <location>Extracellular space</location>
        <location>Extracellular matrix</location>
    </subcellularLocation>
</comment>
<comment type="developmental stage">
    <text evidence="10">In embryonic skeletal muscle, significantly increased levels between 13.5 dpc and 15.5 dpc with maximal expression observed at 15.5 dpc (PubMed:23233679). Decreased levels in postnatal skeletal muscle (PubMed:23233679). In myoblasts, up-regulated soon after induction of myoblast differentiation (PubMed:23233679).</text>
</comment>
<comment type="induction">
    <text evidence="8">Induced in vitro in colon adenocarcinoma cells by interleukin-1, or in vivo in kidney and heart by lipopolysaccharide. Also induced by LH stimulation in granulosa cells of preovulatory follicles.</text>
</comment>
<comment type="domain">
    <text>The spacer domain and the TSP type-1 domains are important for a tight interaction with the extracellular matrix.</text>
</comment>
<comment type="domain">
    <text>The conserved cysteine present in the cysteine-switch motif binds the catalytic zinc ion, thus inhibiting the enzyme. The dissociation of the cysteine from the zinc ion upon the activation-peptide release activates the enzyme.</text>
</comment>
<comment type="PTM">
    <text>The precursor is cleaved by a furin endopeptidase.</text>
</comment>
<comment type="PTM">
    <text evidence="1">Glycosylated. Can be O-fucosylated by POFUT2 on a serine or a threonine residue found within the consensus sequence C1-X(2)-(S/T)-C2-G of the TSP type-1 repeat domains where C1 and C2 are the first and second cysteine residue of the repeat, respectively. Fucosylated repeats can then be further glycosylated by the addition of a beta-1,3-glucose residue by the glucosyltransferase, B3GALTL. Fucosylation mediates the efficient secretion of ADAMTS family members. Can also be C-glycosylated with one or two mannose molecules on tryptophan residues within the consensus sequence W-X-X-W of the TPRs, and N-glycosylated. These other glycosylations can also facilitate secretion (By similarity).</text>
</comment>
<comment type="sequence caution" evidence="12">
    <conflict type="frameshift">
        <sequence resource="EMBL-CDS" id="BAA11088"/>
    </conflict>
</comment>
<comment type="sequence caution" evidence="12">
    <conflict type="erroneous initiation">
        <sequence resource="EMBL-CDS" id="BAA24501"/>
    </conflict>
</comment>
<name>ATS1_MOUSE</name>
<sequence length="968" mass="105801">MQPKVPLGSRKQKPCSDMGDVQRAARSRGSLSAHMLLLLLASITMLLCARGAHGRPTEEDEELVLPSLERAPGHDSTTTRLRLDAFGQQLHLKLQPDSGFLAPGFTLQTVGRSPGSEAQHLDPTGDLAHCFYSGTVNGDPGSAAALSLCEGVRGAFYLQGEEFFIQPAPGVATERLAPAVPEEESSARPQFHILRRRRRGSGGAKCGVMDDETLPTSDSRPESQNTRNQWPVRDPTPQDAGKPSGPGSIRKKRFVSSPRYVETMLVADQSMADFHGSGLKHYLLTLFSVAARFYKHPSIRNSISLVVVKILVIYEEQKGPEVTSNAALTLRNFCSWQKQHNSPSDRDPEHYDTAILFTRQDLCGSHTCDTLGMADVGTVCDPSRSCSVIEDDGLQAAFTTAHELGHVFNMPHDDAKHCASLNGVSGDSHLMASMLSSLDHSQPWSPCSAYMVTSFLDNGHGECLMDKPQNPIKLPSDLPGTLYDANRQCQFTFGEESKHCPDAASTCTTLWCTGTSGGLLVCQTKHFPWADGTSCGEGKWCVSGKCVNKTDMKHFATPVHGSWGPWGPWGDCSRTCGGGVQYTMRECDNPVPKNGGKYCEGKRVRYRSCNIEDCPDNNGKTFREEQCEAHNEFSKASFGNEPTVEWTPKYAGVSPKDRCKLTCEAKGIGYFFVLQPKVVDGTPCSPDSTSVCVQGQCVKAGCDRIIDSKKKFDKCGVCGGNGSTCKKMSGIVTSTRPGYHDIVTIPAGATNIEVKHRNQRGSRNNGSFLAIRAADGTYILNGNFTLSTLEQDLTYKGTVLRYSGSSAALERIRSFSPLKEPLTIQVLMVGHALRPKIKFTYFMKKKTESFNAIPTFSEWVIEEWGECSKTCGSGWQRRVVQCRDINGHPASECAKEVKPASTRPCADLPCPHWQVGDWSPCSKTCGKGYKKRTLKCVSHDGGVLSNESCDPLKKPKHYIDFCTLTQCS</sequence>
<evidence type="ECO:0000250" key="1"/>
<evidence type="ECO:0000250" key="2">
    <source>
        <dbReference type="UniProtKB" id="Q9UHI8"/>
    </source>
</evidence>
<evidence type="ECO:0000255" key="3"/>
<evidence type="ECO:0000255" key="4">
    <source>
        <dbReference type="PROSITE-ProRule" id="PRU00210"/>
    </source>
</evidence>
<evidence type="ECO:0000255" key="5">
    <source>
        <dbReference type="PROSITE-ProRule" id="PRU00276"/>
    </source>
</evidence>
<evidence type="ECO:0000256" key="6">
    <source>
        <dbReference type="SAM" id="MobiDB-lite"/>
    </source>
</evidence>
<evidence type="ECO:0000269" key="7">
    <source>
    </source>
</evidence>
<evidence type="ECO:0000269" key="8">
    <source>
    </source>
</evidence>
<evidence type="ECO:0000269" key="9">
    <source>
    </source>
</evidence>
<evidence type="ECO:0000269" key="10">
    <source>
    </source>
</evidence>
<evidence type="ECO:0000269" key="11">
    <source>
    </source>
</evidence>
<evidence type="ECO:0000305" key="12"/>
<keyword id="KW-0106">Calcium</keyword>
<keyword id="KW-0165">Cleavage on pair of basic residues</keyword>
<keyword id="KW-1015">Disulfide bond</keyword>
<keyword id="KW-0272">Extracellular matrix</keyword>
<keyword id="KW-0325">Glycoprotein</keyword>
<keyword id="KW-0358">Heparin-binding</keyword>
<keyword id="KW-0378">Hydrolase</keyword>
<keyword id="KW-0479">Metal-binding</keyword>
<keyword id="KW-0482">Metalloprotease</keyword>
<keyword id="KW-0645">Protease</keyword>
<keyword id="KW-1185">Reference proteome</keyword>
<keyword id="KW-0677">Repeat</keyword>
<keyword id="KW-0964">Secreted</keyword>
<keyword id="KW-0732">Signal</keyword>
<keyword id="KW-0862">Zinc</keyword>
<keyword id="KW-0865">Zymogen</keyword>
<organism>
    <name type="scientific">Mus musculus</name>
    <name type="common">Mouse</name>
    <dbReference type="NCBI Taxonomy" id="10090"/>
    <lineage>
        <taxon>Eukaryota</taxon>
        <taxon>Metazoa</taxon>
        <taxon>Chordata</taxon>
        <taxon>Craniata</taxon>
        <taxon>Vertebrata</taxon>
        <taxon>Euteleostomi</taxon>
        <taxon>Mammalia</taxon>
        <taxon>Eutheria</taxon>
        <taxon>Euarchontoglires</taxon>
        <taxon>Glires</taxon>
        <taxon>Rodentia</taxon>
        <taxon>Myomorpha</taxon>
        <taxon>Muroidea</taxon>
        <taxon>Muridae</taxon>
        <taxon>Murinae</taxon>
        <taxon>Mus</taxon>
        <taxon>Mus</taxon>
    </lineage>
</organism>